<feature type="initiator methionine" description="Removed" evidence="26">
    <location>
        <position position="1"/>
    </location>
</feature>
<feature type="chain" id="PRO_0000055043" description="ATP-dependent RNA helicase DED1">
    <location>
        <begin position="2"/>
        <end position="604"/>
    </location>
</feature>
<feature type="domain" description="Helicase ATP-binding" evidence="1">
    <location>
        <begin position="173"/>
        <end position="362"/>
    </location>
</feature>
<feature type="domain" description="Helicase C-terminal" evidence="2">
    <location>
        <begin position="373"/>
        <end position="533"/>
    </location>
</feature>
<feature type="region of interest" description="Disordered" evidence="3">
    <location>
        <begin position="1"/>
        <end position="55"/>
    </location>
</feature>
<feature type="region of interest" description="Disordered" evidence="3">
    <location>
        <begin position="67"/>
        <end position="94"/>
    </location>
</feature>
<feature type="region of interest" description="Disordered" evidence="3">
    <location>
        <begin position="533"/>
        <end position="604"/>
    </location>
</feature>
<feature type="short sequence motif" description="Q motif">
    <location>
        <begin position="142"/>
        <end position="170"/>
    </location>
</feature>
<feature type="short sequence motif" description="DEAD box">
    <location>
        <begin position="306"/>
        <end position="309"/>
    </location>
</feature>
<feature type="compositionally biased region" description="Polar residues" evidence="3">
    <location>
        <begin position="1"/>
        <end position="19"/>
    </location>
</feature>
<feature type="compositionally biased region" description="Low complexity" evidence="3">
    <location>
        <begin position="34"/>
        <end position="45"/>
    </location>
</feature>
<feature type="compositionally biased region" description="Gly residues" evidence="3">
    <location>
        <begin position="46"/>
        <end position="55"/>
    </location>
</feature>
<feature type="compositionally biased region" description="Gly residues" evidence="3">
    <location>
        <begin position="67"/>
        <end position="76"/>
    </location>
</feature>
<feature type="compositionally biased region" description="Low complexity" evidence="3">
    <location>
        <begin position="584"/>
        <end position="604"/>
    </location>
</feature>
<feature type="binding site">
    <location>
        <begin position="186"/>
        <end position="193"/>
    </location>
    <ligand>
        <name>ATP</name>
        <dbReference type="ChEBI" id="CHEBI:30616"/>
    </ligand>
</feature>
<feature type="modified residue" description="N-acetylalanine" evidence="26">
    <location>
        <position position="2"/>
    </location>
</feature>
<feature type="modified residue" description="Omega-N-methylarginine" evidence="14 15">
    <location>
        <position position="51"/>
    </location>
</feature>
<feature type="modified residue" description="Dimethylated arginine; alternate" evidence="13">
    <location>
        <position position="62"/>
    </location>
</feature>
<feature type="modified residue" description="Omega-N-methylarginine; alternate" evidence="14 15">
    <location>
        <position position="62"/>
    </location>
</feature>
<feature type="modified residue" description="Phosphoserine" evidence="24">
    <location>
        <position position="215"/>
    </location>
</feature>
<feature type="modified residue" description="Phosphoserine" evidence="24">
    <location>
        <position position="218"/>
    </location>
</feature>
<feature type="modified residue" description="Phosphoserine" evidence="23 24">
    <location>
        <position position="263"/>
    </location>
</feature>
<feature type="modified residue" description="Phosphoserine" evidence="21 22 23 24">
    <location>
        <position position="535"/>
    </location>
</feature>
<feature type="modified residue" description="Phosphoserine" evidence="15 21 22 23 24">
    <location>
        <position position="539"/>
    </location>
</feature>
<feature type="modified residue" description="Phosphoserine" evidence="15 21 23">
    <location>
        <position position="543"/>
    </location>
</feature>
<feature type="modified residue" description="Dimethylated arginine; alternate" evidence="15">
    <location>
        <position position="545"/>
    </location>
</feature>
<feature type="modified residue" description="Omega-N-methylarginine; alternate" evidence="15">
    <location>
        <position position="545"/>
    </location>
</feature>
<feature type="modified residue" description="Phosphoserine" evidence="21">
    <location>
        <position position="572"/>
    </location>
</feature>
<feature type="modified residue" description="Phosphoserine" evidence="22">
    <location>
        <position position="576"/>
    </location>
</feature>
<feature type="modified residue" description="Omega-N-methylarginine" evidence="14 15">
    <location>
        <position position="578"/>
    </location>
</feature>
<feature type="modified residue" description="Phosphoserine" evidence="24">
    <location>
        <position position="598"/>
    </location>
</feature>
<feature type="cross-link" description="Glycyl lysine isopeptide (Lys-Gly) (interchain with G-Cter in ubiquitin)" evidence="25">
    <location>
        <position position="158"/>
    </location>
</feature>
<feature type="mutagenesis site" description="In DED1-120; impairs protein synthesis at 15 degrees Celsius; when associated with D-494." evidence="17">
    <original>G</original>
    <variation>D</variation>
    <location>
        <position position="108"/>
    </location>
</feature>
<feature type="mutagenesis site" description="Slow growth at 18 and 30 degrees Celsius and no growth at 16 degrees Celsius." evidence="9">
    <original>F</original>
    <variation>A</variation>
    <location>
        <position position="144"/>
    </location>
</feature>
<feature type="mutagenesis site" description="Lethal." evidence="9">
    <original>F</original>
    <variation>D</variation>
    <variation>E</variation>
    <location>
        <position position="144"/>
    </location>
</feature>
<feature type="mutagenesis site" description="Lethal in vivo and inhibits ATPase and helicase activities in vitro." evidence="9">
    <original>F</original>
    <variation>A</variation>
    <location>
        <position position="162"/>
    </location>
</feature>
<feature type="mutagenesis site" description="Slow growth at 18 degrees Celsius." evidence="9">
    <original>F</original>
    <variation>C</variation>
    <location>
        <position position="162"/>
    </location>
</feature>
<feature type="mutagenesis site" description="Reduces RNA-helicase activity about 5-fold in vitro." evidence="9">
    <original>F</original>
    <variation>L</variation>
    <location>
        <position position="162"/>
    </location>
</feature>
<feature type="mutagenesis site" description="Reduces RNA-helicase activity about 2.5-fold in vitro." evidence="9">
    <original>T</original>
    <variation>A</variation>
    <location>
        <position position="166"/>
    </location>
</feature>
<feature type="mutagenesis site" description="Slow growth at 18 and 36 degrees Celsius in vivo, and reduces RNA-helicase activity about 5-fold in vitro." evidence="9">
    <original>T</original>
    <variation>S</variation>
    <location>
        <position position="166"/>
    </location>
</feature>
<feature type="mutagenesis site" description="Lethal in vivo and impairs ATPase and RNA-helicase activities in vitro." evidence="9">
    <original>Q</original>
    <variation>A</variation>
    <variation>E</variation>
    <location>
        <position position="169"/>
    </location>
</feature>
<feature type="mutagenesis site" description="Lethal." evidence="9">
    <original>Q</original>
    <variation>C</variation>
    <variation>D</variation>
    <variation>F</variation>
    <variation>G</variation>
    <variation>H</variation>
    <variation>K</variation>
    <variation>L</variation>
    <variation>M</variation>
    <variation>N</variation>
    <variation>S</variation>
    <variation>T</variation>
    <location>
        <position position="169"/>
    </location>
</feature>
<feature type="mutagenesis site" description="Impairs RNA-helicase activity in vitro." evidence="9">
    <original>K</original>
    <variation>A</variation>
    <location>
        <position position="192"/>
    </location>
</feature>
<feature type="mutagenesis site" description="In DED1-18; impairs BMV RNA synthesis; when associated with D-317." evidence="5">
    <original>L</original>
    <variation>M</variation>
    <location>
        <position position="237"/>
    </location>
</feature>
<feature type="mutagenesis site" description="Lethal in vivo and impairs ATPase and RNA-helicase activities in vitro." evidence="4">
    <original>E</original>
    <variation>A</variation>
    <location>
        <position position="307"/>
    </location>
</feature>
<feature type="mutagenesis site" description="In DED1-18; impairs BMV RNA synthesis; when associated with M-237." evidence="5">
    <original>E</original>
    <variation>D</variation>
    <location>
        <position position="317"/>
    </location>
</feature>
<feature type="mutagenesis site" description="In DED1-199; impairs protein synthesis at 15 degrees Celsius." evidence="17">
    <original>G</original>
    <variation>D</variation>
    <location>
        <position position="368"/>
    </location>
</feature>
<feature type="mutagenesis site" description="Strongly reduces ATPase activity and strand displacement activity." evidence="11">
    <original>F</original>
    <variation>Y</variation>
    <variation>M</variation>
    <variation>L</variation>
    <variation>A</variation>
    <variation>W</variation>
    <location>
        <position position="405"/>
    </location>
</feature>
<feature type="mutagenesis site" description="Reduces ATPase activity." evidence="11">
    <original>R</original>
    <variation>A</variation>
    <location>
        <position position="486"/>
    </location>
</feature>
<feature type="mutagenesis site" description="In DED1-120; impairs protein synthesis at 15 degrees Celsius; when associated with D-108." evidence="17">
    <original>G</original>
    <variation>D</variation>
    <location>
        <position position="494"/>
    </location>
</feature>
<feature type="sequence conflict" description="In Ref. 2; CAA27004." evidence="20" ref="2">
    <original>S</original>
    <variation>M</variation>
    <location>
        <position position="37"/>
    </location>
</feature>
<name>DED1_YEAST</name>
<evidence type="ECO:0000255" key="1">
    <source>
        <dbReference type="PROSITE-ProRule" id="PRU00541"/>
    </source>
</evidence>
<evidence type="ECO:0000255" key="2">
    <source>
        <dbReference type="PROSITE-ProRule" id="PRU00542"/>
    </source>
</evidence>
<evidence type="ECO:0000256" key="3">
    <source>
        <dbReference type="SAM" id="MobiDB-lite"/>
    </source>
</evidence>
<evidence type="ECO:0000269" key="4">
    <source>
    </source>
</evidence>
<evidence type="ECO:0000269" key="5">
    <source>
    </source>
</evidence>
<evidence type="ECO:0000269" key="6">
    <source>
    </source>
</evidence>
<evidence type="ECO:0000269" key="7">
    <source>
    </source>
</evidence>
<evidence type="ECO:0000269" key="8">
    <source>
    </source>
</evidence>
<evidence type="ECO:0000269" key="9">
    <source>
    </source>
</evidence>
<evidence type="ECO:0000269" key="10">
    <source>
    </source>
</evidence>
<evidence type="ECO:0000269" key="11">
    <source>
    </source>
</evidence>
<evidence type="ECO:0000269" key="12">
    <source>
    </source>
</evidence>
<evidence type="ECO:0000269" key="13">
    <source>
    </source>
</evidence>
<evidence type="ECO:0000269" key="14">
    <source>
    </source>
</evidence>
<evidence type="ECO:0000269" key="15">
    <source>
    </source>
</evidence>
<evidence type="ECO:0000269" key="16">
    <source>
    </source>
</evidence>
<evidence type="ECO:0000269" key="17">
    <source>
    </source>
</evidence>
<evidence type="ECO:0000269" key="18">
    <source>
    </source>
</evidence>
<evidence type="ECO:0000303" key="19">
    <source>
    </source>
</evidence>
<evidence type="ECO:0000305" key="20"/>
<evidence type="ECO:0007744" key="21">
    <source>
    </source>
</evidence>
<evidence type="ECO:0007744" key="22">
    <source>
    </source>
</evidence>
<evidence type="ECO:0007744" key="23">
    <source>
    </source>
</evidence>
<evidence type="ECO:0007744" key="24">
    <source>
    </source>
</evidence>
<evidence type="ECO:0007744" key="25">
    <source>
    </source>
</evidence>
<evidence type="ECO:0007744" key="26">
    <source>
    </source>
</evidence>
<comment type="function">
    <text evidence="4 5 6 7 8 9 10 11 12 16 17 18">ATP-binding RNA helicase involved in translation initiation. Remodels RNA in response to ADP and ATP concentrations by facilitating disruption, but also formation of RNA duplexes. Has weak ATP-dependent affinity for dsRNA, but strong ATP-dependent affinity for ssRNA. Acts as a virus host factor involved in the replication of the MBV and the L-A viruses by promoting the negative-strand RNA synthesis. May be involved in recognition of the preinitiation complex and DNA binding of the RNA polymerase III and play a role in mRNA splicing.</text>
</comment>
<comment type="catalytic activity">
    <reaction>
        <text>ATP + H2O = ADP + phosphate + H(+)</text>
        <dbReference type="Rhea" id="RHEA:13065"/>
        <dbReference type="ChEBI" id="CHEBI:15377"/>
        <dbReference type="ChEBI" id="CHEBI:15378"/>
        <dbReference type="ChEBI" id="CHEBI:30616"/>
        <dbReference type="ChEBI" id="CHEBI:43474"/>
        <dbReference type="ChEBI" id="CHEBI:456216"/>
        <dbReference type="EC" id="3.6.4.13"/>
    </reaction>
</comment>
<comment type="biophysicochemical properties">
    <kinetics>
        <KM evidence="9 11">0.34 mM for ATP</KM>
    </kinetics>
</comment>
<comment type="subunit">
    <text evidence="8">Interacts with the L-A virus GAG protein and the whole L-A virus particles.</text>
</comment>
<comment type="interaction">
    <interactant intactId="EBI-5744">
        <id>P06634</id>
    </interactant>
    <interactant intactId="EBI-5596">
        <id>P24784</id>
        <label>DBP1</label>
    </interactant>
    <organismsDiffer>false</organismsDiffer>
    <experiments>3</experiments>
</comment>
<comment type="subcellular location">
    <subcellularLocation>
        <location>Cytoplasm</location>
    </subcellularLocation>
</comment>
<comment type="domain">
    <text>The Q motif is unique to and characteristic of the DEAD box family of RNA helicases and controls ATP binding and hydrolysis.</text>
</comment>
<comment type="similarity">
    <text evidence="20">Belongs to the DEAD box helicase family. DDX3/DED1 subfamily.</text>
</comment>
<accession>P06634</accession>
<accession>D6W2R0</accession>
<gene>
    <name evidence="19" type="primary">DED1</name>
    <name type="synonym">SPP81</name>
    <name type="ordered locus">YOR204W</name>
</gene>
<dbReference type="EC" id="3.6.4.13"/>
<dbReference type="EMBL" id="X57278">
    <property type="protein sequence ID" value="CAA40546.1"/>
    <property type="molecule type" value="Genomic_DNA"/>
</dbReference>
<dbReference type="EMBL" id="Z75110">
    <property type="protein sequence ID" value="CAA99419.1"/>
    <property type="molecule type" value="Genomic_DNA"/>
</dbReference>
<dbReference type="EMBL" id="X03245">
    <property type="protein sequence ID" value="CAA27004.1"/>
    <property type="molecule type" value="Genomic_DNA"/>
</dbReference>
<dbReference type="EMBL" id="BK006948">
    <property type="protein sequence ID" value="DAA10976.1"/>
    <property type="molecule type" value="Genomic_DNA"/>
</dbReference>
<dbReference type="PIR" id="S13653">
    <property type="entry name" value="S13653"/>
</dbReference>
<dbReference type="RefSeq" id="NP_014847.3">
    <property type="nucleotide sequence ID" value="NM_001183623.3"/>
</dbReference>
<dbReference type="PDB" id="8PNK">
    <property type="method" value="X-ray"/>
    <property type="resolution" value="2.20 A"/>
    <property type="chains" value="A=82-369"/>
</dbReference>
<dbReference type="PDBsum" id="8PNK"/>
<dbReference type="SMR" id="P06634"/>
<dbReference type="BioGRID" id="34599">
    <property type="interactions" value="1896"/>
</dbReference>
<dbReference type="DIP" id="DIP-5820N"/>
<dbReference type="FunCoup" id="P06634">
    <property type="interactions" value="1523"/>
</dbReference>
<dbReference type="IntAct" id="P06634">
    <property type="interactions" value="97"/>
</dbReference>
<dbReference type="MINT" id="P06634"/>
<dbReference type="STRING" id="4932.YOR204W"/>
<dbReference type="iPTMnet" id="P06634"/>
<dbReference type="PaxDb" id="4932-YOR204W"/>
<dbReference type="PeptideAtlas" id="P06634"/>
<dbReference type="EnsemblFungi" id="YOR204W_mRNA">
    <property type="protein sequence ID" value="YOR204W"/>
    <property type="gene ID" value="YOR204W"/>
</dbReference>
<dbReference type="GeneID" id="854379"/>
<dbReference type="KEGG" id="sce:YOR204W"/>
<dbReference type="AGR" id="SGD:S000005730"/>
<dbReference type="SGD" id="S000005730">
    <property type="gene designation" value="DED1"/>
</dbReference>
<dbReference type="VEuPathDB" id="FungiDB:YOR204W"/>
<dbReference type="eggNOG" id="KOG0335">
    <property type="taxonomic scope" value="Eukaryota"/>
</dbReference>
<dbReference type="GeneTree" id="ENSGT00940000168275"/>
<dbReference type="HOGENOM" id="CLU_003041_16_3_1"/>
<dbReference type="InParanoid" id="P06634"/>
<dbReference type="OMA" id="ISGNDRW"/>
<dbReference type="OrthoDB" id="196131at2759"/>
<dbReference type="BioCyc" id="YEAST:G3O-33708-MONOMER"/>
<dbReference type="BRENDA" id="3.6.4.13">
    <property type="organism ID" value="984"/>
</dbReference>
<dbReference type="Reactome" id="R-SCE-6798695">
    <property type="pathway name" value="Neutrophil degranulation"/>
</dbReference>
<dbReference type="SABIO-RK" id="P06634"/>
<dbReference type="BioGRID-ORCS" id="854379">
    <property type="hits" value="8 hits in 10 CRISPR screens"/>
</dbReference>
<dbReference type="CD-CODE" id="A777E0F8">
    <property type="entry name" value="P-body"/>
</dbReference>
<dbReference type="CD-CODE" id="E03F929F">
    <property type="entry name" value="Stress granule"/>
</dbReference>
<dbReference type="PRO" id="PR:P06634"/>
<dbReference type="Proteomes" id="UP000002311">
    <property type="component" value="Chromosome XV"/>
</dbReference>
<dbReference type="RNAct" id="P06634">
    <property type="molecule type" value="protein"/>
</dbReference>
<dbReference type="GO" id="GO:0005737">
    <property type="term" value="C:cytoplasm"/>
    <property type="evidence" value="ECO:0000314"/>
    <property type="project" value="SGD"/>
</dbReference>
<dbReference type="GO" id="GO:0010494">
    <property type="term" value="C:cytoplasmic stress granule"/>
    <property type="evidence" value="ECO:0000314"/>
    <property type="project" value="SGD"/>
</dbReference>
<dbReference type="GO" id="GO:0005634">
    <property type="term" value="C:nucleus"/>
    <property type="evidence" value="ECO:0000314"/>
    <property type="project" value="SGD"/>
</dbReference>
<dbReference type="GO" id="GO:0005524">
    <property type="term" value="F:ATP binding"/>
    <property type="evidence" value="ECO:0007669"/>
    <property type="project" value="UniProtKB-KW"/>
</dbReference>
<dbReference type="GO" id="GO:0016887">
    <property type="term" value="F:ATP hydrolysis activity"/>
    <property type="evidence" value="ECO:0007669"/>
    <property type="project" value="RHEA"/>
</dbReference>
<dbReference type="GO" id="GO:0031370">
    <property type="term" value="F:eukaryotic initiation factor 4G binding"/>
    <property type="evidence" value="ECO:0000353"/>
    <property type="project" value="SGD"/>
</dbReference>
<dbReference type="GO" id="GO:0051880">
    <property type="term" value="F:G-quadruplex DNA binding"/>
    <property type="evidence" value="ECO:0000314"/>
    <property type="project" value="SGD"/>
</dbReference>
<dbReference type="GO" id="GO:0002151">
    <property type="term" value="F:G-quadruplex RNA binding"/>
    <property type="evidence" value="ECO:0000314"/>
    <property type="project" value="SGD"/>
</dbReference>
<dbReference type="GO" id="GO:0003729">
    <property type="term" value="F:mRNA binding"/>
    <property type="evidence" value="ECO:0000314"/>
    <property type="project" value="SGD"/>
</dbReference>
<dbReference type="GO" id="GO:0003724">
    <property type="term" value="F:RNA helicase activity"/>
    <property type="evidence" value="ECO:0000314"/>
    <property type="project" value="SGD"/>
</dbReference>
<dbReference type="GO" id="GO:0033592">
    <property type="term" value="F:RNA strand annealing activity"/>
    <property type="evidence" value="ECO:0000314"/>
    <property type="project" value="SGD"/>
</dbReference>
<dbReference type="GO" id="GO:0003743">
    <property type="term" value="F:translation initiation factor activity"/>
    <property type="evidence" value="ECO:0007669"/>
    <property type="project" value="UniProtKB-KW"/>
</dbReference>
<dbReference type="GO" id="GO:1901195">
    <property type="term" value="P:positive regulation of formation of translation preinitiation complex"/>
    <property type="evidence" value="ECO:0000314"/>
    <property type="project" value="SGD"/>
</dbReference>
<dbReference type="GO" id="GO:0000390">
    <property type="term" value="P:spliceosomal complex disassembly"/>
    <property type="evidence" value="ECO:0000314"/>
    <property type="project" value="SGD"/>
</dbReference>
<dbReference type="GO" id="GO:0006413">
    <property type="term" value="P:translational initiation"/>
    <property type="evidence" value="ECO:0000315"/>
    <property type="project" value="SGD"/>
</dbReference>
<dbReference type="CDD" id="cd17967">
    <property type="entry name" value="DEADc_DDX3_DDX4"/>
    <property type="match status" value="1"/>
</dbReference>
<dbReference type="CDD" id="cd18787">
    <property type="entry name" value="SF2_C_DEAD"/>
    <property type="match status" value="1"/>
</dbReference>
<dbReference type="FunFam" id="3.40.50.300:FF:000160">
    <property type="entry name" value="ATP-dependent RNA helicase DDX3X"/>
    <property type="match status" value="1"/>
</dbReference>
<dbReference type="FunFam" id="3.40.50.300:FF:000008">
    <property type="entry name" value="ATP-dependent RNA helicase RhlB"/>
    <property type="match status" value="1"/>
</dbReference>
<dbReference type="Gene3D" id="3.40.50.300">
    <property type="entry name" value="P-loop containing nucleotide triphosphate hydrolases"/>
    <property type="match status" value="2"/>
</dbReference>
<dbReference type="InterPro" id="IPR011545">
    <property type="entry name" value="DEAD/DEAH_box_helicase_dom"/>
</dbReference>
<dbReference type="InterPro" id="IPR044763">
    <property type="entry name" value="Ded1/Dbp1_DEADc"/>
</dbReference>
<dbReference type="InterPro" id="IPR014001">
    <property type="entry name" value="Helicase_ATP-bd"/>
</dbReference>
<dbReference type="InterPro" id="IPR001650">
    <property type="entry name" value="Helicase_C-like"/>
</dbReference>
<dbReference type="InterPro" id="IPR027417">
    <property type="entry name" value="P-loop_NTPase"/>
</dbReference>
<dbReference type="InterPro" id="IPR000629">
    <property type="entry name" value="RNA-helicase_DEAD-box_CS"/>
</dbReference>
<dbReference type="InterPro" id="IPR014014">
    <property type="entry name" value="RNA_helicase_DEAD_Q_motif"/>
</dbReference>
<dbReference type="PANTHER" id="PTHR47958">
    <property type="entry name" value="ATP-DEPENDENT RNA HELICASE DBP3"/>
    <property type="match status" value="1"/>
</dbReference>
<dbReference type="Pfam" id="PF00270">
    <property type="entry name" value="DEAD"/>
    <property type="match status" value="1"/>
</dbReference>
<dbReference type="Pfam" id="PF00271">
    <property type="entry name" value="Helicase_C"/>
    <property type="match status" value="1"/>
</dbReference>
<dbReference type="SMART" id="SM00487">
    <property type="entry name" value="DEXDc"/>
    <property type="match status" value="1"/>
</dbReference>
<dbReference type="SMART" id="SM00490">
    <property type="entry name" value="HELICc"/>
    <property type="match status" value="1"/>
</dbReference>
<dbReference type="SUPFAM" id="SSF52540">
    <property type="entry name" value="P-loop containing nucleoside triphosphate hydrolases"/>
    <property type="match status" value="1"/>
</dbReference>
<dbReference type="PROSITE" id="PS00039">
    <property type="entry name" value="DEAD_ATP_HELICASE"/>
    <property type="match status" value="1"/>
</dbReference>
<dbReference type="PROSITE" id="PS51192">
    <property type="entry name" value="HELICASE_ATP_BIND_1"/>
    <property type="match status" value="1"/>
</dbReference>
<dbReference type="PROSITE" id="PS51194">
    <property type="entry name" value="HELICASE_CTER"/>
    <property type="match status" value="1"/>
</dbReference>
<dbReference type="PROSITE" id="PS51195">
    <property type="entry name" value="Q_MOTIF"/>
    <property type="match status" value="1"/>
</dbReference>
<sequence>MAELSEQVQNLSINDNNENGYVPPHLRGKPRSARNNSSNYNNNNGGYNGGRGGGSFFSNNRRGGYGNGGFFGGNNGGSRSNGRSGGRWIDGKHVPAPRNEKAEIAIFGVPEDPNFQSSGINFDNYDDIPVDASGKDVPEPITEFTSPPLDGLLLENIKLARFTKPTPVQKYSVPIVANGRDLMACAQTGSGKTGGFLFPVLSESFKTGPSPQPESQGSFYQRKAYPTAVIMAPTRELATQIFDEAKKFTYRSWVKACVVYGGSPIGNQLREIERGCDLLVATPGRLNDLLERGKISLANVKYLVLDEADRMLDMGFEPQIRHIVEDCDMTPVGERQTLMFSATFPADIQHLARDFLSDYIFLSVGRVGSTSENITQKVLYVENQDKKSALLDLLSASTDGLTLIFVETKRMADQLTDFLIMQNFRATAIHGDRTQSERERALAAFRSGAATLLVATAVAARGLDIPNVTHVINYDLPSDVDDYVHRIGRTGRAGNTGLATAFFNSENSNIVKGLHEILTEANQEVPSFLKDAMMSAPGSRSNSRRGGFGRNNNRDYRKAGGASAGGWGSSRSRDNSFRGGSGWGSDSKSSGWGNSGGSNNSSWW</sequence>
<protein>
    <recommendedName>
        <fullName evidence="20">ATP-dependent RNA helicase DED1</fullName>
        <ecNumber>3.6.4.13</ecNumber>
    </recommendedName>
    <alternativeName>
        <fullName>DEAD box protein 1</fullName>
    </alternativeName>
    <alternativeName>
        <fullName evidence="19">Defines essential domain protein 1</fullName>
    </alternativeName>
</protein>
<keyword id="KW-0002">3D-structure</keyword>
<keyword id="KW-0007">Acetylation</keyword>
<keyword id="KW-0067">ATP-binding</keyword>
<keyword id="KW-0963">Cytoplasm</keyword>
<keyword id="KW-0347">Helicase</keyword>
<keyword id="KW-0378">Hydrolase</keyword>
<keyword id="KW-0396">Initiation factor</keyword>
<keyword id="KW-1017">Isopeptide bond</keyword>
<keyword id="KW-0488">Methylation</keyword>
<keyword id="KW-0547">Nucleotide-binding</keyword>
<keyword id="KW-0597">Phosphoprotein</keyword>
<keyword id="KW-0648">Protein biosynthesis</keyword>
<keyword id="KW-1185">Reference proteome</keyword>
<keyword id="KW-0694">RNA-binding</keyword>
<keyword id="KW-0832">Ubl conjugation</keyword>
<organism>
    <name type="scientific">Saccharomyces cerevisiae (strain ATCC 204508 / S288c)</name>
    <name type="common">Baker's yeast</name>
    <dbReference type="NCBI Taxonomy" id="559292"/>
    <lineage>
        <taxon>Eukaryota</taxon>
        <taxon>Fungi</taxon>
        <taxon>Dikarya</taxon>
        <taxon>Ascomycota</taxon>
        <taxon>Saccharomycotina</taxon>
        <taxon>Saccharomycetes</taxon>
        <taxon>Saccharomycetales</taxon>
        <taxon>Saccharomycetaceae</taxon>
        <taxon>Saccharomyces</taxon>
    </lineage>
</organism>
<reference key="1">
    <citation type="journal article" date="1991" name="Nature">
        <title>A suppressor of a yeast splicing mutation (prp8-1) encodes a putative ATP-dependent RNA helicase.</title>
        <authorList>
            <person name="Jamieson D.J."/>
            <person name="Rahe B."/>
            <person name="Pringle J."/>
            <person name="Beggs J.D."/>
        </authorList>
    </citation>
    <scope>NUCLEOTIDE SEQUENCE [GENOMIC DNA]</scope>
    <scope>FUNCTION</scope>
    <source>
        <strain>A364A X H79-20.3</strain>
    </source>
</reference>
<reference key="2">
    <citation type="journal article" date="1997" name="Nature">
        <title>The nucleotide sequence of Saccharomyces cerevisiae chromosome XV.</title>
        <authorList>
            <person name="Dujon B."/>
            <person name="Albermann K."/>
            <person name="Aldea M."/>
            <person name="Alexandraki D."/>
            <person name="Ansorge W."/>
            <person name="Arino J."/>
            <person name="Benes V."/>
            <person name="Bohn C."/>
            <person name="Bolotin-Fukuhara M."/>
            <person name="Bordonne R."/>
            <person name="Boyer J."/>
            <person name="Camasses A."/>
            <person name="Casamayor A."/>
            <person name="Casas C."/>
            <person name="Cheret G."/>
            <person name="Cziepluch C."/>
            <person name="Daignan-Fornier B."/>
            <person name="Dang V.-D."/>
            <person name="de Haan M."/>
            <person name="Delius H."/>
            <person name="Durand P."/>
            <person name="Fairhead C."/>
            <person name="Feldmann H."/>
            <person name="Gaillon L."/>
            <person name="Galisson F."/>
            <person name="Gamo F.-J."/>
            <person name="Gancedo C."/>
            <person name="Goffeau A."/>
            <person name="Goulding S.E."/>
            <person name="Grivell L.A."/>
            <person name="Habbig B."/>
            <person name="Hand N.J."/>
            <person name="Hani J."/>
            <person name="Hattenhorst U."/>
            <person name="Hebling U."/>
            <person name="Hernando Y."/>
            <person name="Herrero E."/>
            <person name="Heumann K."/>
            <person name="Hiesel R."/>
            <person name="Hilger F."/>
            <person name="Hofmann B."/>
            <person name="Hollenberg C.P."/>
            <person name="Hughes B."/>
            <person name="Jauniaux J.-C."/>
            <person name="Kalogeropoulos A."/>
            <person name="Katsoulou C."/>
            <person name="Kordes E."/>
            <person name="Lafuente M.J."/>
            <person name="Landt O."/>
            <person name="Louis E.J."/>
            <person name="Maarse A.C."/>
            <person name="Madania A."/>
            <person name="Mannhaupt G."/>
            <person name="Marck C."/>
            <person name="Martin R.P."/>
            <person name="Mewes H.-W."/>
            <person name="Michaux G."/>
            <person name="Paces V."/>
            <person name="Parle-McDermott A.G."/>
            <person name="Pearson B.M."/>
            <person name="Perrin A."/>
            <person name="Pettersson B."/>
            <person name="Poch O."/>
            <person name="Pohl T.M."/>
            <person name="Poirey R."/>
            <person name="Portetelle D."/>
            <person name="Pujol A."/>
            <person name="Purnelle B."/>
            <person name="Ramezani Rad M."/>
            <person name="Rechmann S."/>
            <person name="Schwager C."/>
            <person name="Schweizer M."/>
            <person name="Sor F."/>
            <person name="Sterky F."/>
            <person name="Tarassov I.A."/>
            <person name="Teodoru C."/>
            <person name="Tettelin H."/>
            <person name="Thierry A."/>
            <person name="Tobiasch E."/>
            <person name="Tzermia M."/>
            <person name="Uhlen M."/>
            <person name="Unseld M."/>
            <person name="Valens M."/>
            <person name="Vandenbol M."/>
            <person name="Vetter I."/>
            <person name="Vlcek C."/>
            <person name="Voet M."/>
            <person name="Volckaert G."/>
            <person name="Voss H."/>
            <person name="Wambutt R."/>
            <person name="Wedler H."/>
            <person name="Wiemann S."/>
            <person name="Winsor B."/>
            <person name="Wolfe K.H."/>
            <person name="Zollner A."/>
            <person name="Zumstein E."/>
            <person name="Kleine K."/>
        </authorList>
    </citation>
    <scope>NUCLEOTIDE SEQUENCE [LARGE SCALE GENOMIC DNA]</scope>
    <source>
        <strain>ATCC 204508 / S288c</strain>
    </source>
</reference>
<reference key="3">
    <citation type="journal article" date="2014" name="G3 (Bethesda)">
        <title>The reference genome sequence of Saccharomyces cerevisiae: Then and now.</title>
        <authorList>
            <person name="Engel S.R."/>
            <person name="Dietrich F.S."/>
            <person name="Fisk D.G."/>
            <person name="Binkley G."/>
            <person name="Balakrishnan R."/>
            <person name="Costanzo M.C."/>
            <person name="Dwight S.S."/>
            <person name="Hitz B.C."/>
            <person name="Karra K."/>
            <person name="Nash R.S."/>
            <person name="Weng S."/>
            <person name="Wong E.D."/>
            <person name="Lloyd P."/>
            <person name="Skrzypek M.S."/>
            <person name="Miyasato S.R."/>
            <person name="Simison M."/>
            <person name="Cherry J.M."/>
        </authorList>
    </citation>
    <scope>GENOME REANNOTATION</scope>
    <source>
        <strain>ATCC 204508 / S288c</strain>
    </source>
</reference>
<reference key="4">
    <citation type="journal article" date="1985" name="Nucleic Acids Res.">
        <title>Nucleotide sequence and transcriptional mapping of the yeast pet56-his3-ded1 gene region.</title>
        <authorList>
            <person name="Struhl K."/>
        </authorList>
    </citation>
    <scope>NUCLEOTIDE SEQUENCE [GENOMIC DNA] OF 1-112</scope>
</reference>
<reference key="5">
    <citation type="journal article" date="1995" name="EMBO J.">
        <title>A mutation in the C31 subunit of Saccharomyces cerevisiae RNA polymerase III affects transcription initiation.</title>
        <authorList>
            <person name="Thuillier V."/>
            <person name="Stettler S."/>
            <person name="Sentenac A."/>
            <person name="Thuriaux P."/>
            <person name="Werner M."/>
        </authorList>
    </citation>
    <scope>FUNCTION</scope>
</reference>
<reference key="6">
    <citation type="journal article" date="1997" name="Proc. Natl. Acad. Sci. U.S.A.">
        <title>The p20 and Ded1 proteins have antagonistic roles in eIF4E-dependent translation in Saccharomyces cerevisiae.</title>
        <authorList>
            <person name="de la Cruz J."/>
            <person name="Iost I."/>
            <person name="Kressler D."/>
            <person name="Linder P."/>
        </authorList>
    </citation>
    <scope>FUNCTION</scope>
</reference>
<reference key="7">
    <citation type="journal article" date="1997" name="Science">
        <title>Requirement of the DEAD-Box protein ded1p for messenger RNA translation.</title>
        <authorList>
            <person name="Chuang R.-Y."/>
            <person name="Weaver P.L."/>
            <person name="Liu Z."/>
            <person name="Chang T.-H."/>
        </authorList>
    </citation>
    <scope>FUNCTION</scope>
    <scope>CELLULAR LOCATION</scope>
    <scope>MUTAGENESIS OF GLY-108; GLY-368 AND GLY-494</scope>
</reference>
<reference key="8">
    <citation type="journal article" date="1999" name="J. Biol. Chem.">
        <title>Ded1p, a DEAD-box protein required for translation initiation in Saccharomyces cerevisiae, is an RNA helicase.</title>
        <authorList>
            <person name="Iost I."/>
            <person name="Dreyfus M."/>
            <person name="Linder P."/>
        </authorList>
    </citation>
    <scope>FUNCTION</scope>
    <scope>SINGLE STRAND AND DOUBLE STRAND RNA-BINDING</scope>
    <scope>MUTAGENESIS OF GLU-307</scope>
</reference>
<reference key="9">
    <citation type="journal article" date="2000" name="Proc. Natl. Acad. Sci. U.S.A.">
        <title>A mutant allele of essential, general translation initiation factor DED1 selectively inhibits translation of a viral mRNA.</title>
        <authorList>
            <person name="Noueiry A.O."/>
            <person name="Chen J."/>
            <person name="Ahlquist P."/>
        </authorList>
    </citation>
    <scope>FUNCTION</scope>
    <scope>MUTAGENESIS OF LEU-237 AND GLU-317</scope>
</reference>
<reference key="10">
    <citation type="journal article" date="2003" name="Proc. Natl. Acad. Sci. U.S.A.">
        <title>Systematic, genome-wide identification of host genes affecting replication of a positive-strand RNA virus.</title>
        <authorList>
            <person name="Kushner D.B."/>
            <person name="Lindenbach B.D."/>
            <person name="Grdzelishvili V.Z."/>
            <person name="Noueiry A.O."/>
            <person name="Paul S.M."/>
            <person name="Ahlquist P."/>
        </authorList>
    </citation>
    <scope>FUNCTION</scope>
</reference>
<reference key="11">
    <citation type="journal article" date="2004" name="EMBO J.">
        <title>The newly discovered Q motif of DEAD-box RNA helicases regulates RNA-binding and helicase activity.</title>
        <authorList>
            <person name="Cordin O."/>
            <person name="Tanner N.K."/>
            <person name="Doere M."/>
            <person name="Linder P."/>
            <person name="Banroques J."/>
        </authorList>
    </citation>
    <scope>FUNCTION</scope>
    <scope>BIOPHYSICOCHEMICAL PROPERTIES</scope>
    <scope>RNA-BINDING</scope>
    <scope>MUTAGENESIS OF PHE-144; PHE-162; THR-166; GLN-169 AND LYS-192</scope>
</reference>
<reference key="12">
    <citation type="journal article" date="2004" name="Mol. Microbiol.">
        <title>Dynamics and processivity of 40S ribosome scanning on mRNA in yeast.</title>
        <authorList>
            <person name="Berthelot K."/>
            <person name="Muldoon M."/>
            <person name="Rajkowitsch L."/>
            <person name="Hughes J."/>
            <person name="McCarthy J.E.G."/>
        </authorList>
    </citation>
    <scope>FUNCTION</scope>
</reference>
<reference key="13">
    <citation type="journal article" date="2004" name="Nucleic Acids Res.">
        <title>Ded1p, a conserved DExD/H-box translation factor, can promote yeast L-A virus negative-strand RNA synthesis in vitro.</title>
        <authorList>
            <person name="Chong J.-L."/>
            <person name="Chuang R.-Y."/>
            <person name="Tung L."/>
            <person name="Chang T.-H."/>
        </authorList>
    </citation>
    <scope>FUNCTION</scope>
    <scope>INTERACTION WITH THE L-A VIRUS GAG PROTEIN AND WITH L-A VIRUS PARTICLES</scope>
</reference>
<reference key="14">
    <citation type="journal article" date="2005" name="Biochemistry">
        <title>ATP- and ADP-dependent modulation of RNA unwinding and strand annealing activities by the DEAD-box protein DED1.</title>
        <authorList>
            <person name="Yang Q."/>
            <person name="Jankowsky E."/>
        </authorList>
    </citation>
    <scope>FUNCTION</scope>
</reference>
<reference key="15">
    <citation type="journal article" date="2007" name="J. Proteome Res.">
        <title>Large-scale phosphorylation analysis of alpha-factor-arrested Saccharomyces cerevisiae.</title>
        <authorList>
            <person name="Li X."/>
            <person name="Gerber S.A."/>
            <person name="Rudner A.D."/>
            <person name="Beausoleil S.A."/>
            <person name="Haas W."/>
            <person name="Villen J."/>
            <person name="Elias J.E."/>
            <person name="Gygi S.P."/>
        </authorList>
    </citation>
    <scope>PHOSPHORYLATION [LARGE SCALE ANALYSIS] AT SER-535; SER-539 AND SER-576</scope>
    <scope>IDENTIFICATION BY MASS SPECTROMETRY [LARGE SCALE ANALYSIS]</scope>
    <source>
        <strain>ADR376</strain>
    </source>
</reference>
<reference key="16">
    <citation type="journal article" date="2007" name="Proc. Natl. Acad. Sci. U.S.A.">
        <title>Analysis of phosphorylation sites on proteins from Saccharomyces cerevisiae by electron transfer dissociation (ETD) mass spectrometry.</title>
        <authorList>
            <person name="Chi A."/>
            <person name="Huttenhower C."/>
            <person name="Geer L.Y."/>
            <person name="Coon J.J."/>
            <person name="Syka J.E.P."/>
            <person name="Bai D.L."/>
            <person name="Shabanowitz J."/>
            <person name="Burke D.J."/>
            <person name="Troyanskaya O.G."/>
            <person name="Hunt D.F."/>
        </authorList>
    </citation>
    <scope>PHOSPHORYLATION [LARGE SCALE ANALYSIS] AT SER-535; SER-539; SER-543 AND SER-572</scope>
    <scope>IDENTIFICATION BY MASS SPECTROMETRY [LARGE SCALE ANALYSIS]</scope>
</reference>
<reference key="17">
    <citation type="journal article" date="2008" name="Mol. Cell. Biol.">
        <title>A conserved phenylalanine of motif IV in superfamily 2 helicases is required for cooperative, ATP-dependent binding of RNA substrates in DEAD-box proteins.</title>
        <authorList>
            <person name="Banroques J."/>
            <person name="Cordin O."/>
            <person name="Doere M."/>
            <person name="Linder P."/>
            <person name="Tanner N.K."/>
        </authorList>
    </citation>
    <scope>FUNCTION</scope>
    <scope>BIOPHYSICOCHEMICAL PROPERTIES</scope>
    <scope>RNA-BINDING</scope>
    <scope>MUTAGENESIS OF PHE-405 AND ARG-486</scope>
</reference>
<reference key="18">
    <citation type="journal article" date="2008" name="Mol. Cell. Proteomics">
        <title>A multidimensional chromatography technology for in-depth phosphoproteome analysis.</title>
        <authorList>
            <person name="Albuquerque C.P."/>
            <person name="Smolka M.B."/>
            <person name="Payne S.H."/>
            <person name="Bafna V."/>
            <person name="Eng J."/>
            <person name="Zhou H."/>
        </authorList>
    </citation>
    <scope>PHOSPHORYLATION [LARGE SCALE ANALYSIS] AT SER-263; SER-535; SER-539 AND SER-543</scope>
    <scope>IDENTIFICATION BY MASS SPECTROMETRY [LARGE SCALE ANALYSIS]</scope>
</reference>
<reference key="19">
    <citation type="journal article" date="2009" name="Science">
        <title>Global analysis of Cdk1 substrate phosphorylation sites provides insights into evolution.</title>
        <authorList>
            <person name="Holt L.J."/>
            <person name="Tuch B.B."/>
            <person name="Villen J."/>
            <person name="Johnson A.D."/>
            <person name="Gygi S.P."/>
            <person name="Morgan D.O."/>
        </authorList>
    </citation>
    <scope>PHOSPHORYLATION [LARGE SCALE ANALYSIS] AT SER-215; SER-218; SER-263; SER-535; SER-539 AND SER-598</scope>
    <scope>IDENTIFICATION BY MASS SPECTROMETRY [LARGE SCALE ANALYSIS]</scope>
</reference>
<reference key="20">
    <citation type="journal article" date="2012" name="Proc. Natl. Acad. Sci. U.S.A.">
        <title>N-terminal acetylome analyses and functional insights of the N-terminal acetyltransferase NatB.</title>
        <authorList>
            <person name="Van Damme P."/>
            <person name="Lasa M."/>
            <person name="Polevoda B."/>
            <person name="Gazquez C."/>
            <person name="Elosegui-Artola A."/>
            <person name="Kim D.S."/>
            <person name="De Juan-Pardo E."/>
            <person name="Demeyer K."/>
            <person name="Hole K."/>
            <person name="Larrea E."/>
            <person name="Timmerman E."/>
            <person name="Prieto J."/>
            <person name="Arnesen T."/>
            <person name="Sherman F."/>
            <person name="Gevaert K."/>
            <person name="Aldabe R."/>
        </authorList>
    </citation>
    <scope>ACETYLATION [LARGE SCALE ANALYSIS] AT ALA-2</scope>
    <scope>CLEAVAGE OF INITIATOR METHIONINE [LARGE SCALE ANALYSIS]</scope>
    <scope>IDENTIFICATION BY MASS SPECTROMETRY [LARGE SCALE ANALYSIS]</scope>
</reference>
<reference key="21">
    <citation type="journal article" date="2012" name="Proteomics">
        <title>Sites of ubiquitin attachment in Saccharomyces cerevisiae.</title>
        <authorList>
            <person name="Starita L.M."/>
            <person name="Lo R.S."/>
            <person name="Eng J.K."/>
            <person name="von Haller P.D."/>
            <person name="Fields S."/>
        </authorList>
    </citation>
    <scope>UBIQUITINATION [LARGE SCALE ANALYSIS] AT LYS-158</scope>
    <scope>IDENTIFICATION BY MASS SPECTROMETRY [LARGE SCALE ANALYSIS]</scope>
</reference>
<reference key="22">
    <citation type="journal article" date="2013" name="J. Proteome Res.">
        <title>Analysis of the proteome of Saccharomyces cerevisiae for methylarginine.</title>
        <authorList>
            <person name="Low J.K."/>
            <person name="Hart-Smith G."/>
            <person name="Erce M.A."/>
            <person name="Wilkins M.R."/>
        </authorList>
    </citation>
    <scope>METHYLATION AT ARG-62</scope>
</reference>
<reference key="23">
    <citation type="journal article" date="2015" name="Proteomics">
        <title>Expanding the yeast protein arginine methylome.</title>
        <authorList>
            <person name="Plank M."/>
            <person name="Fischer R."/>
            <person name="Geoghegan V."/>
            <person name="Charles P.D."/>
            <person name="Konietzny R."/>
            <person name="Acuto O."/>
            <person name="Pears C."/>
            <person name="Schofield C.J."/>
            <person name="Kessler B.M."/>
        </authorList>
    </citation>
    <scope>METHYLATION AT ARG-51; ARG-62 AND ARG-578</scope>
</reference>
<reference key="24">
    <citation type="journal article" date="2021" name="J. Proteome Res.">
        <title>Discovery of arginine methylation, phosphorylation, and their co-occurrence in condensate-associated proteins in Saccharomyces cerevisiae.</title>
        <authorList>
            <person name="Hamey J.J."/>
            <person name="Nguyen A."/>
            <person name="Wilkins M.R."/>
        </authorList>
    </citation>
    <scope>METHYLATION AT ARG-51; ARG-62; ARG-545 AND ARG-578</scope>
    <scope>PHOSPHORYLATION AT SER-539 AND SER-543</scope>
</reference>
<proteinExistence type="evidence at protein level"/>